<accession>Q6HEC7</accession>
<name>MTNB_BACHK</name>
<dbReference type="EC" id="4.2.1.109" evidence="1"/>
<dbReference type="EMBL" id="AE017355">
    <property type="protein sequence ID" value="AAT60705.1"/>
    <property type="molecule type" value="Genomic_DNA"/>
</dbReference>
<dbReference type="RefSeq" id="WP_000811330.1">
    <property type="nucleotide sequence ID" value="NC_005957.1"/>
</dbReference>
<dbReference type="RefSeq" id="YP_038099.1">
    <property type="nucleotide sequence ID" value="NC_005957.1"/>
</dbReference>
<dbReference type="SMR" id="Q6HEC7"/>
<dbReference type="KEGG" id="btk:BT9727_3780"/>
<dbReference type="PATRIC" id="fig|281309.8.peg.4030"/>
<dbReference type="HOGENOM" id="CLU_006033_4_1_9"/>
<dbReference type="UniPathway" id="UPA00904">
    <property type="reaction ID" value="UER00875"/>
</dbReference>
<dbReference type="Proteomes" id="UP000001301">
    <property type="component" value="Chromosome"/>
</dbReference>
<dbReference type="GO" id="GO:0005737">
    <property type="term" value="C:cytoplasm"/>
    <property type="evidence" value="ECO:0007669"/>
    <property type="project" value="InterPro"/>
</dbReference>
<dbReference type="GO" id="GO:0046570">
    <property type="term" value="F:methylthioribulose 1-phosphate dehydratase activity"/>
    <property type="evidence" value="ECO:0007669"/>
    <property type="project" value="UniProtKB-UniRule"/>
</dbReference>
<dbReference type="GO" id="GO:0008270">
    <property type="term" value="F:zinc ion binding"/>
    <property type="evidence" value="ECO:0007669"/>
    <property type="project" value="UniProtKB-UniRule"/>
</dbReference>
<dbReference type="GO" id="GO:0019509">
    <property type="term" value="P:L-methionine salvage from methylthioadenosine"/>
    <property type="evidence" value="ECO:0007669"/>
    <property type="project" value="UniProtKB-UniRule"/>
</dbReference>
<dbReference type="FunFam" id="3.40.225.10:FF:000007">
    <property type="entry name" value="Methylthioribulose-1-phosphate dehydratase"/>
    <property type="match status" value="1"/>
</dbReference>
<dbReference type="Gene3D" id="3.40.225.10">
    <property type="entry name" value="Class II aldolase/adducin N-terminal domain"/>
    <property type="match status" value="1"/>
</dbReference>
<dbReference type="HAMAP" id="MF_01677">
    <property type="entry name" value="Salvage_MtnB"/>
    <property type="match status" value="1"/>
</dbReference>
<dbReference type="InterPro" id="IPR001303">
    <property type="entry name" value="Aldolase_II/adducin_N"/>
</dbReference>
<dbReference type="InterPro" id="IPR036409">
    <property type="entry name" value="Aldolase_II/adducin_N_sf"/>
</dbReference>
<dbReference type="InterPro" id="IPR017714">
    <property type="entry name" value="MethylthioRu-1-P_deHdtase_MtnB"/>
</dbReference>
<dbReference type="NCBIfam" id="NF005244">
    <property type="entry name" value="PRK06754.1"/>
    <property type="match status" value="1"/>
</dbReference>
<dbReference type="NCBIfam" id="TIGR03328">
    <property type="entry name" value="salvage_mtnB"/>
    <property type="match status" value="1"/>
</dbReference>
<dbReference type="PANTHER" id="PTHR10640">
    <property type="entry name" value="METHYLTHIORIBULOSE-1-PHOSPHATE DEHYDRATASE"/>
    <property type="match status" value="1"/>
</dbReference>
<dbReference type="PANTHER" id="PTHR10640:SF7">
    <property type="entry name" value="METHYLTHIORIBULOSE-1-PHOSPHATE DEHYDRATASE"/>
    <property type="match status" value="1"/>
</dbReference>
<dbReference type="Pfam" id="PF00596">
    <property type="entry name" value="Aldolase_II"/>
    <property type="match status" value="1"/>
</dbReference>
<dbReference type="SMART" id="SM01007">
    <property type="entry name" value="Aldolase_II"/>
    <property type="match status" value="1"/>
</dbReference>
<dbReference type="SUPFAM" id="SSF53639">
    <property type="entry name" value="AraD/HMP-PK domain-like"/>
    <property type="match status" value="1"/>
</dbReference>
<feature type="chain" id="PRO_0000357070" description="Methylthioribulose-1-phosphate dehydratase">
    <location>
        <begin position="1"/>
        <end position="212"/>
    </location>
</feature>
<feature type="binding site" evidence="1">
    <location>
        <position position="97"/>
    </location>
    <ligand>
        <name>Zn(2+)</name>
        <dbReference type="ChEBI" id="CHEBI:29105"/>
    </ligand>
</feature>
<feature type="binding site" evidence="1">
    <location>
        <position position="99"/>
    </location>
    <ligand>
        <name>Zn(2+)</name>
        <dbReference type="ChEBI" id="CHEBI:29105"/>
    </ligand>
</feature>
<comment type="function">
    <text evidence="1">Catalyzes the dehydration of methylthioribulose-1-phosphate (MTRu-1-P) into 2,3-diketo-5-methylthiopentyl-1-phosphate (DK-MTP-1-P).</text>
</comment>
<comment type="catalytic activity">
    <reaction evidence="1">
        <text>5-(methylsulfanyl)-D-ribulose 1-phosphate = 5-methylsulfanyl-2,3-dioxopentyl phosphate + H2O</text>
        <dbReference type="Rhea" id="RHEA:15549"/>
        <dbReference type="ChEBI" id="CHEBI:15377"/>
        <dbReference type="ChEBI" id="CHEBI:58548"/>
        <dbReference type="ChEBI" id="CHEBI:58828"/>
        <dbReference type="EC" id="4.2.1.109"/>
    </reaction>
</comment>
<comment type="cofactor">
    <cofactor evidence="1">
        <name>Zn(2+)</name>
        <dbReference type="ChEBI" id="CHEBI:29105"/>
    </cofactor>
    <text evidence="1">Binds 1 zinc ion per subunit.</text>
</comment>
<comment type="pathway">
    <text evidence="1">Amino-acid biosynthesis; L-methionine biosynthesis via salvage pathway; L-methionine from S-methyl-5-thio-alpha-D-ribose 1-phosphate: step 2/6.</text>
</comment>
<comment type="subunit">
    <text evidence="1">Homotetramer.</text>
</comment>
<comment type="similarity">
    <text evidence="1">Belongs to the aldolase class II family. MtnB subfamily.</text>
</comment>
<evidence type="ECO:0000255" key="1">
    <source>
        <dbReference type="HAMAP-Rule" id="MF_01677"/>
    </source>
</evidence>
<organism>
    <name type="scientific">Bacillus thuringiensis subsp. konkukian (strain 97-27)</name>
    <dbReference type="NCBI Taxonomy" id="281309"/>
    <lineage>
        <taxon>Bacteria</taxon>
        <taxon>Bacillati</taxon>
        <taxon>Bacillota</taxon>
        <taxon>Bacilli</taxon>
        <taxon>Bacillales</taxon>
        <taxon>Bacillaceae</taxon>
        <taxon>Bacillus</taxon>
        <taxon>Bacillus cereus group</taxon>
    </lineage>
</organism>
<reference key="1">
    <citation type="journal article" date="2006" name="J. Bacteriol.">
        <title>Pathogenomic sequence analysis of Bacillus cereus and Bacillus thuringiensis isolates closely related to Bacillus anthracis.</title>
        <authorList>
            <person name="Han C.S."/>
            <person name="Xie G."/>
            <person name="Challacombe J.F."/>
            <person name="Altherr M.R."/>
            <person name="Bhotika S.S."/>
            <person name="Bruce D."/>
            <person name="Campbell C.S."/>
            <person name="Campbell M.L."/>
            <person name="Chen J."/>
            <person name="Chertkov O."/>
            <person name="Cleland C."/>
            <person name="Dimitrijevic M."/>
            <person name="Doggett N.A."/>
            <person name="Fawcett J.J."/>
            <person name="Glavina T."/>
            <person name="Goodwin L.A."/>
            <person name="Hill K.K."/>
            <person name="Hitchcock P."/>
            <person name="Jackson P.J."/>
            <person name="Keim P."/>
            <person name="Kewalramani A.R."/>
            <person name="Longmire J."/>
            <person name="Lucas S."/>
            <person name="Malfatti S."/>
            <person name="McMurry K."/>
            <person name="Meincke L.J."/>
            <person name="Misra M."/>
            <person name="Moseman B.L."/>
            <person name="Mundt M."/>
            <person name="Munk A.C."/>
            <person name="Okinaka R.T."/>
            <person name="Parson-Quintana B."/>
            <person name="Reilly L.P."/>
            <person name="Richardson P."/>
            <person name="Robinson D.L."/>
            <person name="Rubin E."/>
            <person name="Saunders E."/>
            <person name="Tapia R."/>
            <person name="Tesmer J.G."/>
            <person name="Thayer N."/>
            <person name="Thompson L.S."/>
            <person name="Tice H."/>
            <person name="Ticknor L.O."/>
            <person name="Wills P.L."/>
            <person name="Brettin T.S."/>
            <person name="Gilna P."/>
        </authorList>
    </citation>
    <scope>NUCLEOTIDE SEQUENCE [LARGE SCALE GENOMIC DNA]</scope>
    <source>
        <strain>97-27</strain>
    </source>
</reference>
<sequence>MKQLFRQWYDLSEIKKELTTRNWFPATSGNISIKVSHEPLTFLITASGKDKTKTTPDDFLLVDHLGVPVLETELRPSAETILHTHIYNNTNAGCVLHVHTTDNNVITNLYSDAVTLQNQEIIKALDIWEEGATIHIPIIENHSHIPTLGENFRKHIQGDSGAVLIRNHGITVWGRDSFDAKKRLEAYEFLFQFHIKLLSIQGGVSNGANSYS</sequence>
<gene>
    <name evidence="1" type="primary">mtnB</name>
    <name type="ordered locus">BT9727_3780</name>
</gene>
<protein>
    <recommendedName>
        <fullName evidence="1">Methylthioribulose-1-phosphate dehydratase</fullName>
        <shortName evidence="1">MTRu-1-P dehydratase</shortName>
        <ecNumber evidence="1">4.2.1.109</ecNumber>
    </recommendedName>
</protein>
<keyword id="KW-0028">Amino-acid biosynthesis</keyword>
<keyword id="KW-0456">Lyase</keyword>
<keyword id="KW-0479">Metal-binding</keyword>
<keyword id="KW-0486">Methionine biosynthesis</keyword>
<keyword id="KW-0862">Zinc</keyword>
<proteinExistence type="inferred from homology"/>